<feature type="transit peptide" description="Mitochondrion" evidence="3">
    <location>
        <begin position="1"/>
        <end position="114"/>
    </location>
</feature>
<feature type="chain" id="PRO_0000017696" description="Mitochondrial proton/calcium exchanger protein">
    <location>
        <begin position="115"/>
        <end position="739"/>
    </location>
</feature>
<feature type="topological domain" description="Mitochondrial intermembrane" evidence="1">
    <location>
        <begin position="115"/>
        <end position="207"/>
    </location>
</feature>
<feature type="transmembrane region" description="Helical" evidence="3">
    <location>
        <begin position="208"/>
        <end position="228"/>
    </location>
</feature>
<feature type="topological domain" description="Mitochondrial matrix" evidence="1">
    <location>
        <begin position="229"/>
        <end position="739"/>
    </location>
</feature>
<feature type="domain" description="Letm1 RBD" evidence="4">
    <location>
        <begin position="251"/>
        <end position="536"/>
    </location>
</feature>
<feature type="domain" description="EF-hand">
    <location>
        <begin position="663"/>
        <end position="698"/>
    </location>
</feature>
<feature type="region of interest" description="Disordered" evidence="6">
    <location>
        <begin position="717"/>
        <end position="739"/>
    </location>
</feature>
<feature type="coiled-coil region" evidence="3">
    <location>
        <begin position="115"/>
        <end position="135"/>
    </location>
</feature>
<feature type="coiled-coil region" evidence="3">
    <location>
        <begin position="445"/>
        <end position="492"/>
    </location>
</feature>
<feature type="coiled-coil region" evidence="3">
    <location>
        <begin position="537"/>
        <end position="626"/>
    </location>
</feature>
<feature type="coiled-coil region" evidence="3">
    <location>
        <begin position="707"/>
        <end position="738"/>
    </location>
</feature>
<feature type="binding site" evidence="5">
    <location>
        <position position="676"/>
    </location>
    <ligand>
        <name>Ca(2+)</name>
        <dbReference type="ChEBI" id="CHEBI:29108"/>
    </ligand>
</feature>
<feature type="binding site" evidence="5">
    <location>
        <position position="678"/>
    </location>
    <ligand>
        <name>Ca(2+)</name>
        <dbReference type="ChEBI" id="CHEBI:29108"/>
    </ligand>
</feature>
<feature type="binding site" evidence="5">
    <location>
        <position position="680"/>
    </location>
    <ligand>
        <name>Ca(2+)</name>
        <dbReference type="ChEBI" id="CHEBI:29108"/>
    </ligand>
</feature>
<feature type="binding site" evidence="5">
    <location>
        <position position="682"/>
    </location>
    <ligand>
        <name>Ca(2+)</name>
        <dbReference type="ChEBI" id="CHEBI:29108"/>
    </ligand>
</feature>
<feature type="binding site" evidence="5">
    <location>
        <position position="687"/>
    </location>
    <ligand>
        <name>Ca(2+)</name>
        <dbReference type="ChEBI" id="CHEBI:29108"/>
    </ligand>
</feature>
<feature type="modified residue" description="Phosphothreonine; by PINK1" evidence="1">
    <location>
        <position position="191"/>
    </location>
</feature>
<feature type="modified residue" description="N6-acetyllysine" evidence="1">
    <location>
        <position position="596"/>
    </location>
</feature>
<dbReference type="EMBL" id="BC083642">
    <property type="protein sequence ID" value="AAH83642.1"/>
    <property type="molecule type" value="mRNA"/>
</dbReference>
<dbReference type="RefSeq" id="NP_001005884.1">
    <property type="nucleotide sequence ID" value="NM_001005884.1"/>
</dbReference>
<dbReference type="SMR" id="Q5XIN6"/>
<dbReference type="BioGRID" id="258178">
    <property type="interactions" value="2"/>
</dbReference>
<dbReference type="FunCoup" id="Q5XIN6">
    <property type="interactions" value="3600"/>
</dbReference>
<dbReference type="IntAct" id="Q5XIN6">
    <property type="interactions" value="1"/>
</dbReference>
<dbReference type="MINT" id="Q5XIN6"/>
<dbReference type="STRING" id="10116.ENSRNOP00000022540"/>
<dbReference type="CarbonylDB" id="Q5XIN6"/>
<dbReference type="iPTMnet" id="Q5XIN6"/>
<dbReference type="PhosphoSitePlus" id="Q5XIN6"/>
<dbReference type="jPOST" id="Q5XIN6"/>
<dbReference type="PaxDb" id="10116-ENSRNOP00000022540"/>
<dbReference type="Ensembl" id="ENSRNOT00000022540.7">
    <property type="protein sequence ID" value="ENSRNOP00000022540.3"/>
    <property type="gene ID" value="ENSRNOG00000016427.7"/>
</dbReference>
<dbReference type="GeneID" id="305457"/>
<dbReference type="KEGG" id="rno:305457"/>
<dbReference type="AGR" id="RGD:1359678"/>
<dbReference type="CTD" id="3954"/>
<dbReference type="RGD" id="1359678">
    <property type="gene designation" value="Letm1"/>
</dbReference>
<dbReference type="eggNOG" id="KOG1043">
    <property type="taxonomic scope" value="Eukaryota"/>
</dbReference>
<dbReference type="GeneTree" id="ENSGT00950000183167"/>
<dbReference type="HOGENOM" id="CLU_008958_2_1_1"/>
<dbReference type="InParanoid" id="Q5XIN6"/>
<dbReference type="OrthoDB" id="81000at9989"/>
<dbReference type="PhylomeDB" id="Q5XIN6"/>
<dbReference type="TreeFam" id="TF316321"/>
<dbReference type="Reactome" id="R-RNO-9013408">
    <property type="pathway name" value="RHOG GTPase cycle"/>
</dbReference>
<dbReference type="PRO" id="PR:Q5XIN6"/>
<dbReference type="Proteomes" id="UP000002494">
    <property type="component" value="Chromosome 14"/>
</dbReference>
<dbReference type="Bgee" id="ENSRNOG00000016427">
    <property type="expression patterns" value="Expressed in adult mammalian kidney and 19 other cell types or tissues"/>
</dbReference>
<dbReference type="GO" id="GO:0005743">
    <property type="term" value="C:mitochondrial inner membrane"/>
    <property type="evidence" value="ECO:0000250"/>
    <property type="project" value="UniProtKB"/>
</dbReference>
<dbReference type="GO" id="GO:0005739">
    <property type="term" value="C:mitochondrion"/>
    <property type="evidence" value="ECO:0000266"/>
    <property type="project" value="RGD"/>
</dbReference>
<dbReference type="GO" id="GO:0015369">
    <property type="term" value="F:calcium:proton antiporter activity"/>
    <property type="evidence" value="ECO:0000250"/>
    <property type="project" value="UniProtKB"/>
</dbReference>
<dbReference type="GO" id="GO:0046872">
    <property type="term" value="F:metal ion binding"/>
    <property type="evidence" value="ECO:0007669"/>
    <property type="project" value="UniProtKB-KW"/>
</dbReference>
<dbReference type="GO" id="GO:0043022">
    <property type="term" value="F:ribosome binding"/>
    <property type="evidence" value="ECO:0007669"/>
    <property type="project" value="InterPro"/>
</dbReference>
<dbReference type="GO" id="GO:0099093">
    <property type="term" value="P:calcium export from the mitochondrion"/>
    <property type="evidence" value="ECO:0000250"/>
    <property type="project" value="UniProtKB"/>
</dbReference>
<dbReference type="GO" id="GO:0006816">
    <property type="term" value="P:calcium ion transport"/>
    <property type="evidence" value="ECO:0000266"/>
    <property type="project" value="RGD"/>
</dbReference>
<dbReference type="GO" id="GO:0042407">
    <property type="term" value="P:cristae formation"/>
    <property type="evidence" value="ECO:0000266"/>
    <property type="project" value="RGD"/>
</dbReference>
<dbReference type="GO" id="GO:0007007">
    <property type="term" value="P:inner mitochondrial membrane organization"/>
    <property type="evidence" value="ECO:0000250"/>
    <property type="project" value="UniProtKB"/>
</dbReference>
<dbReference type="GO" id="GO:0051560">
    <property type="term" value="P:mitochondrial calcium ion homeostasis"/>
    <property type="evidence" value="ECO:0000250"/>
    <property type="project" value="UniProtKB"/>
</dbReference>
<dbReference type="GO" id="GO:0006851">
    <property type="term" value="P:mitochondrial calcium ion transmembrane transport"/>
    <property type="evidence" value="ECO:0000250"/>
    <property type="project" value="UniProtKB"/>
</dbReference>
<dbReference type="GO" id="GO:0140141">
    <property type="term" value="P:mitochondrial potassium ion transmembrane transport"/>
    <property type="evidence" value="ECO:0000250"/>
    <property type="project" value="UniProtKB"/>
</dbReference>
<dbReference type="GO" id="GO:0007005">
    <property type="term" value="P:mitochondrion organization"/>
    <property type="evidence" value="ECO:0000318"/>
    <property type="project" value="GO_Central"/>
</dbReference>
<dbReference type="GO" id="GO:0051562">
    <property type="term" value="P:negative regulation of mitochondrial calcium ion concentration"/>
    <property type="evidence" value="ECO:0000250"/>
    <property type="project" value="UniProtKB"/>
</dbReference>
<dbReference type="GO" id="GO:0034214">
    <property type="term" value="P:protein hexamerization"/>
    <property type="evidence" value="ECO:0000250"/>
    <property type="project" value="UniProtKB"/>
</dbReference>
<dbReference type="GO" id="GO:0051260">
    <property type="term" value="P:protein homooligomerization"/>
    <property type="evidence" value="ECO:0000250"/>
    <property type="project" value="UniProtKB"/>
</dbReference>
<dbReference type="GO" id="GO:1900069">
    <property type="term" value="P:regulation of cellular hyperosmotic salinity response"/>
    <property type="evidence" value="ECO:0000250"/>
    <property type="project" value="UniProtKB"/>
</dbReference>
<dbReference type="FunFam" id="1.10.238.10:FF:000290">
    <property type="entry name" value="LETM1 and EF-hand domain-containing protein 1, mitochondrial"/>
    <property type="match status" value="1"/>
</dbReference>
<dbReference type="Gene3D" id="1.10.238.10">
    <property type="entry name" value="EF-hand"/>
    <property type="match status" value="1"/>
</dbReference>
<dbReference type="InterPro" id="IPR011992">
    <property type="entry name" value="EF-hand-dom_pair"/>
</dbReference>
<dbReference type="InterPro" id="IPR018247">
    <property type="entry name" value="EF_Hand_1_Ca_BS"/>
</dbReference>
<dbReference type="InterPro" id="IPR033122">
    <property type="entry name" value="LETM1-like_RBD"/>
</dbReference>
<dbReference type="InterPro" id="IPR044202">
    <property type="entry name" value="LETM1/MDM38-like"/>
</dbReference>
<dbReference type="PANTHER" id="PTHR14009">
    <property type="entry name" value="LEUCINE ZIPPER-EF-HAND CONTAINING TRANSMEMBRANE PROTEIN"/>
    <property type="match status" value="1"/>
</dbReference>
<dbReference type="PANTHER" id="PTHR14009:SF8">
    <property type="entry name" value="MITOCHONDRIAL PROTON_CALCIUM EXCHANGER PROTEIN"/>
    <property type="match status" value="1"/>
</dbReference>
<dbReference type="Pfam" id="PF07766">
    <property type="entry name" value="LETM1_RBD"/>
    <property type="match status" value="1"/>
</dbReference>
<dbReference type="SUPFAM" id="SSF47473">
    <property type="entry name" value="EF-hand"/>
    <property type="match status" value="1"/>
</dbReference>
<dbReference type="PROSITE" id="PS00018">
    <property type="entry name" value="EF_HAND_1"/>
    <property type="match status" value="1"/>
</dbReference>
<dbReference type="PROSITE" id="PS51758">
    <property type="entry name" value="LETM1_RBD"/>
    <property type="match status" value="1"/>
</dbReference>
<keyword id="KW-0007">Acetylation</keyword>
<keyword id="KW-0050">Antiport</keyword>
<keyword id="KW-0106">Calcium</keyword>
<keyword id="KW-0109">Calcium transport</keyword>
<keyword id="KW-0175">Coiled coil</keyword>
<keyword id="KW-0903">Direct protein sequencing</keyword>
<keyword id="KW-0406">Ion transport</keyword>
<keyword id="KW-0472">Membrane</keyword>
<keyword id="KW-0479">Metal-binding</keyword>
<keyword id="KW-0496">Mitochondrion</keyword>
<keyword id="KW-0999">Mitochondrion inner membrane</keyword>
<keyword id="KW-0597">Phosphoprotein</keyword>
<keyword id="KW-0630">Potassium</keyword>
<keyword id="KW-0633">Potassium transport</keyword>
<keyword id="KW-1185">Reference proteome</keyword>
<keyword id="KW-0809">Transit peptide</keyword>
<keyword id="KW-0812">Transmembrane</keyword>
<keyword id="KW-1133">Transmembrane helix</keyword>
<keyword id="KW-0813">Transport</keyword>
<accession>Q5XIN6</accession>
<protein>
    <recommendedName>
        <fullName evidence="8">Mitochondrial proton/calcium exchanger protein</fullName>
    </recommendedName>
    <alternativeName>
        <fullName evidence="1">Electroneutral mitochondrial K(+)/H(+)exchanger</fullName>
        <shortName evidence="1">KHE</shortName>
    </alternativeName>
    <alternativeName>
        <fullName>Leucine zipper-EF-hand-containing transmembrane protein 1</fullName>
    </alternativeName>
</protein>
<sequence length="739" mass="83060">MASILLRSCRGRGPARLASPRAASPRGSLRDRACLSCTRTVGLTSHESVLSRCCTPANPVYLYFKSEPLSCWTQRPECQGTVARAAWTPASARLVVTGPQYLPVRGWHSSSPLGEDSMIEKSLKSLKDKNKKLEEGGPVYSPPAQVVVKKSLGQKILDELKHYYHGFRLLWIDTKIAARMLWRILNGHTLTRRERRQFLRICADLFRLVPFLVFVVVPFMEFLLPVVVKLFPNMLPSTFETQSIKEERLKKELRVKLELAKFLQDTIEEMALKNKAAKGNATKDFSAFFQKIRETGERPSNEEIMRFSKLFEDELTLDNLTRPQLVALCKLLELQSIGTNNFLRFQLTMRLRSIKADDKLISEEGVDSLTVKELQAACRARGMRALGVTEDRLKGQLKQWLDLHLYHEIPTSLLILSRAMYLPDTLSPADQLKSTLQTLPEIVAKEAQVKAAEVEGEQVDNKAKLEATLQEEAAIQQEHLEELKRAAETAKDIQPEVAEATVPGRPGAELQPKMVDVIPPSEILKDTAPVLEGLKGEEITKEEIDILSDACSKLKEQKKSLTKEKEELELLKEDVQDYSEDLQEIKKELSKTGDEKYIEESTASKRLSKRVQQMIGQIDGLITQLETTQQNGKLDPAAASSPTGESVISVDELISAMKQIKHIPEHKLISLTSALDENKDGNINIDDLVKVIDLVNKEDVQISTTQVAEIVATLEKEEKVEEKEKAKEKAEKEAAEVKN</sequence>
<evidence type="ECO:0000250" key="1">
    <source>
        <dbReference type="UniProtKB" id="O95202"/>
    </source>
</evidence>
<evidence type="ECO:0000250" key="2">
    <source>
        <dbReference type="UniProtKB" id="Q9Z2I0"/>
    </source>
</evidence>
<evidence type="ECO:0000255" key="3"/>
<evidence type="ECO:0000255" key="4">
    <source>
        <dbReference type="PROSITE-ProRule" id="PRU01094"/>
    </source>
</evidence>
<evidence type="ECO:0000255" key="5">
    <source>
        <dbReference type="PROSITE-ProRule" id="PRU10142"/>
    </source>
</evidence>
<evidence type="ECO:0000256" key="6">
    <source>
        <dbReference type="SAM" id="MobiDB-lite"/>
    </source>
</evidence>
<evidence type="ECO:0000269" key="7">
    <source>
    </source>
</evidence>
<evidence type="ECO:0000305" key="8"/>
<reference key="1">
    <citation type="journal article" date="2004" name="Genome Res.">
        <title>The status, quality, and expansion of the NIH full-length cDNA project: the Mammalian Gene Collection (MGC).</title>
        <authorList>
            <consortium name="The MGC Project Team"/>
        </authorList>
    </citation>
    <scope>NUCLEOTIDE SEQUENCE [LARGE SCALE MRNA]</scope>
    <source>
        <tissue>Testis</tissue>
    </source>
</reference>
<reference key="2">
    <citation type="submission" date="2007-07" db="UniProtKB">
        <authorList>
            <person name="Lubec G."/>
            <person name="Diao W."/>
            <person name="Kang S.U."/>
        </authorList>
    </citation>
    <scope>PROTEIN SEQUENCE OF 451-462 AND 492-513</scope>
    <scope>IDENTIFICATION BY MASS SPECTROMETRY</scope>
    <source>
        <strain>Sprague-Dawley</strain>
        <tissue>Brain</tissue>
        <tissue>Hippocampus</tissue>
    </source>
</reference>
<reference key="3">
    <citation type="journal article" date="2008" name="J. Cell Sci.">
        <title>Characterization of the mitochondrial protein LETM1, which maintains the mitochondrial tubular shapes and interacts with the AAA-ATPase BCS1L.</title>
        <authorList>
            <person name="Tamai S."/>
            <person name="Iida H."/>
            <person name="Yokota S."/>
            <person name="Sayano T."/>
            <person name="Kiguchiya S."/>
            <person name="Ishihara N."/>
            <person name="Hayashi J."/>
            <person name="Mihara K."/>
            <person name="Oka T."/>
        </authorList>
    </citation>
    <scope>TISSUE SPECIFICITY</scope>
</reference>
<organism>
    <name type="scientific">Rattus norvegicus</name>
    <name type="common">Rat</name>
    <dbReference type="NCBI Taxonomy" id="10116"/>
    <lineage>
        <taxon>Eukaryota</taxon>
        <taxon>Metazoa</taxon>
        <taxon>Chordata</taxon>
        <taxon>Craniata</taxon>
        <taxon>Vertebrata</taxon>
        <taxon>Euteleostomi</taxon>
        <taxon>Mammalia</taxon>
        <taxon>Eutheria</taxon>
        <taxon>Euarchontoglires</taxon>
        <taxon>Glires</taxon>
        <taxon>Rodentia</taxon>
        <taxon>Myomorpha</taxon>
        <taxon>Muroidea</taxon>
        <taxon>Muridae</taxon>
        <taxon>Murinae</taxon>
        <taxon>Rattus</taxon>
    </lineage>
</organism>
<comment type="function">
    <text evidence="1 2">Plays an important role in maintenance of mitochondrial morphology and in mediating either calcium or potassium/proton antiport (By similarity). Mediates proton-dependent calcium efflux from mitochondrion (By similarity). Also functions as an electroneutral mitochondrial proton/potassium exchanger (By similarity). Crucial for the maintenance of mitochondrial tubular networks and for the assembly of the supercomplexes of the respiratory chain (By similarity). Required for the maintenance of the tubular shape and cristae organization (By similarity). Essential for early embryonic development (By similarity).</text>
</comment>
<comment type="catalytic activity">
    <reaction evidence="1">
        <text>Ca(2+)(in) + 2 H(+)(out) = Ca(2+)(out) + 2 H(+)(in)</text>
        <dbReference type="Rhea" id="RHEA:72199"/>
        <dbReference type="ChEBI" id="CHEBI:15378"/>
        <dbReference type="ChEBI" id="CHEBI:29108"/>
    </reaction>
</comment>
<comment type="catalytic activity">
    <reaction evidence="1">
        <text>K(+)(in) + H(+)(out) = K(+)(out) + H(+)(in)</text>
        <dbReference type="Rhea" id="RHEA:29467"/>
        <dbReference type="ChEBI" id="CHEBI:15378"/>
        <dbReference type="ChEBI" id="CHEBI:29103"/>
    </reaction>
</comment>
<comment type="activity regulation">
    <text evidence="1">Inhibited by ruthenium red or its derivative Ru360.</text>
</comment>
<comment type="subunit">
    <text evidence="1 2">Homohexamer (By similarity). Interacts with BCS1L (By similarity). Interacts with GHITM (By similarity).</text>
</comment>
<comment type="subcellular location">
    <subcellularLocation>
        <location evidence="2">Mitochondrion inner membrane</location>
        <topology evidence="3">Single-pass membrane protein</topology>
    </subcellularLocation>
</comment>
<comment type="tissue specificity">
    <text evidence="7">Ubiquitous.</text>
</comment>
<comment type="PTM">
    <text evidence="1">PINK1-mediated phosphorylation at Thr-191, positively regulates its mitochondrial calcium transport activity.</text>
</comment>
<comment type="similarity">
    <text evidence="8">Belongs to the LETM1 family.</text>
</comment>
<name>LETM1_RAT</name>
<proteinExistence type="evidence at protein level"/>
<gene>
    <name type="primary">Letm1</name>
</gene>